<organism>
    <name type="scientific">Lactococcus lactis subsp. lactis (strain IL1403)</name>
    <name type="common">Streptococcus lactis</name>
    <dbReference type="NCBI Taxonomy" id="272623"/>
    <lineage>
        <taxon>Bacteria</taxon>
        <taxon>Bacillati</taxon>
        <taxon>Bacillota</taxon>
        <taxon>Bacilli</taxon>
        <taxon>Lactobacillales</taxon>
        <taxon>Streptococcaceae</taxon>
        <taxon>Lactococcus</taxon>
    </lineage>
</organism>
<proteinExistence type="evidence at protein level"/>
<feature type="initiator methionine" description="Removed" evidence="1">
    <location>
        <position position="1"/>
    </location>
</feature>
<feature type="chain" id="PRO_0000078230" description="Neutral endopeptidase">
    <location>
        <begin position="2"/>
        <end position="627"/>
    </location>
</feature>
<feature type="domain" description="Peptidase M13" evidence="2">
    <location>
        <begin position="1"/>
        <end position="627"/>
    </location>
</feature>
<feature type="active site" evidence="2 3">
    <location>
        <position position="476"/>
    </location>
</feature>
<feature type="active site" description="Proton donor" evidence="2">
    <location>
        <position position="539"/>
    </location>
</feature>
<feature type="binding site" evidence="2 3">
    <location>
        <position position="475"/>
    </location>
    <ligand>
        <name>Zn(2+)</name>
        <dbReference type="ChEBI" id="CHEBI:29105"/>
        <note>catalytic</note>
    </ligand>
</feature>
<feature type="binding site" evidence="2 3">
    <location>
        <position position="479"/>
    </location>
    <ligand>
        <name>Zn(2+)</name>
        <dbReference type="ChEBI" id="CHEBI:29105"/>
        <note>catalytic</note>
    </ligand>
</feature>
<feature type="binding site" evidence="2">
    <location>
        <position position="535"/>
    </location>
    <ligand>
        <name>Zn(2+)</name>
        <dbReference type="ChEBI" id="CHEBI:29105"/>
        <note>catalytic</note>
    </ligand>
</feature>
<feature type="sequence conflict" description="In Ref. 1; AAA16168." evidence="4" ref="1">
    <original>T</original>
    <variation>A</variation>
    <location>
        <position position="76"/>
    </location>
</feature>
<feature type="sequence conflict" description="In Ref. 1; AAA16168." evidence="4" ref="1">
    <original>S</original>
    <variation>N</variation>
    <location>
        <position position="217"/>
    </location>
</feature>
<feature type="sequence conflict" description="In Ref. 1; AAA16168." evidence="4" ref="1">
    <original>A</original>
    <variation>V</variation>
    <location>
        <position position="351"/>
    </location>
</feature>
<feature type="sequence conflict" description="In Ref. 1; AAA16168." evidence="4" ref="1">
    <original>E</original>
    <variation>K</variation>
    <location>
        <position position="407"/>
    </location>
</feature>
<feature type="sequence conflict" description="In Ref. 1; AAA16168." evidence="4" ref="1">
    <original>T</original>
    <variation>A</variation>
    <location>
        <position position="471"/>
    </location>
</feature>
<sequence>MTRIQDDLFATVNAEWLENAEIPADKPRISAFDELVLKNEKNLAKDLADLSQNLPTDNPELLEAIKFYNKAGDWQTREKADFSAVKNELAKVETLNTFEDFKNNLTQLVFHSQAPLPFSFSVEPDMKDAIHYSLGFSGPGLILPDTTYYNDEHPRKKELLDFWAKNTSEILKTFDVENAEEIAKSALKFDALLVPSANTSEEWAKYAELYHPISTDSFVSKVKNLDLKSLIKDLVKTEPDKVIVYEDRFYESFDSLINEENWSLIKAWMLTKIARGATSFFNEDLRILGGAYGRFLSNVQEARSQEKHQLDLTESYFSQVIGLFYGKKYFGEAAKADVKRMVTAMIKVYQARLSKNEWLSQETAEKAIEKLDAITPFIGFPDKLPEIYSRLKTTSGSLYEDALKFDEILTARTFEKFSEDVDKTSWHMPAHMVNAYYSPDSNTIVFPAAILQAPFYSLEQSSSQNYGGIGTVIAHEISHAFDNNGAQFDKEGNLNKWWLDEDYEAFEEKQKEMIALFDGVETEAGPANGKLIVSENIADQGGITAALTAAKDEKDVDLKAFFSQWAKIWRMKASKEFQQMLLSMDVHAPAKLRANIPPTNLEEFYETFDVKETDKMYRAPENRLKIW</sequence>
<keyword id="KW-0378">Hydrolase</keyword>
<keyword id="KW-0479">Metal-binding</keyword>
<keyword id="KW-0482">Metalloprotease</keyword>
<keyword id="KW-0645">Protease</keyword>
<keyword id="KW-1185">Reference proteome</keyword>
<keyword id="KW-0862">Zinc</keyword>
<evidence type="ECO:0000250" key="1"/>
<evidence type="ECO:0000255" key="2">
    <source>
        <dbReference type="PROSITE-ProRule" id="PRU01233"/>
    </source>
</evidence>
<evidence type="ECO:0000255" key="3">
    <source>
        <dbReference type="PROSITE-ProRule" id="PRU10095"/>
    </source>
</evidence>
<evidence type="ECO:0000305" key="4"/>
<reference key="1">
    <citation type="journal article" date="1993" name="J. Bacteriol.">
        <title>Genetic and biochemical characterization of the oligopeptide transport system of Lactococcus lactis.</title>
        <authorList>
            <person name="Tynkkynen S."/>
            <person name="Buist G."/>
            <person name="Kunji E."/>
            <person name="Kok J."/>
            <person name="Poolman B."/>
            <person name="Venema G."/>
            <person name="Haandrikman A."/>
        </authorList>
    </citation>
    <scope>NUCLEOTIDE SEQUENCE [GENOMIC DNA]</scope>
    <source>
        <strain>SSL135</strain>
    </source>
</reference>
<reference key="2">
    <citation type="journal article" date="2001" name="Genome Res.">
        <title>The complete genome sequence of the lactic acid bacterium Lactococcus lactis ssp. lactis IL1403.</title>
        <authorList>
            <person name="Bolotin A."/>
            <person name="Wincker P."/>
            <person name="Mauger S."/>
            <person name="Jaillon O."/>
            <person name="Malarme K."/>
            <person name="Weissenbach J."/>
            <person name="Ehrlich S.D."/>
            <person name="Sorokin A."/>
        </authorList>
    </citation>
    <scope>NUCLEOTIDE SEQUENCE [LARGE SCALE GENOMIC DNA]</scope>
    <source>
        <strain>IL1403</strain>
    </source>
</reference>
<accession>Q07744</accession>
<dbReference type="EC" id="3.4.24.-"/>
<dbReference type="EMBL" id="L18760">
    <property type="protein sequence ID" value="AAA16168.1"/>
    <property type="molecule type" value="Unassigned_DNA"/>
</dbReference>
<dbReference type="EMBL" id="AE005176">
    <property type="protein sequence ID" value="AAK05901.1"/>
    <property type="molecule type" value="Genomic_DNA"/>
</dbReference>
<dbReference type="PIR" id="C86850">
    <property type="entry name" value="C86850"/>
</dbReference>
<dbReference type="PIR" id="F53290">
    <property type="entry name" value="F53290"/>
</dbReference>
<dbReference type="RefSeq" id="NP_267960.1">
    <property type="nucleotide sequence ID" value="NC_002662.1"/>
</dbReference>
<dbReference type="RefSeq" id="WP_010906145.1">
    <property type="nucleotide sequence ID" value="NC_002662.1"/>
</dbReference>
<dbReference type="SMR" id="Q07744"/>
<dbReference type="MEROPS" id="M13.004"/>
<dbReference type="PaxDb" id="272623-L49741"/>
<dbReference type="EnsemblBacteria" id="AAK05901">
    <property type="protein sequence ID" value="AAK05901"/>
    <property type="gene ID" value="L49741"/>
</dbReference>
<dbReference type="KEGG" id="lla:L49741"/>
<dbReference type="PATRIC" id="fig|272623.7.peg.1931"/>
<dbReference type="eggNOG" id="COG3590">
    <property type="taxonomic scope" value="Bacteria"/>
</dbReference>
<dbReference type="HOGENOM" id="CLU_006187_7_2_9"/>
<dbReference type="OrthoDB" id="9775677at2"/>
<dbReference type="Proteomes" id="UP000002196">
    <property type="component" value="Chromosome"/>
</dbReference>
<dbReference type="GO" id="GO:0005886">
    <property type="term" value="C:plasma membrane"/>
    <property type="evidence" value="ECO:0007669"/>
    <property type="project" value="TreeGrafter"/>
</dbReference>
<dbReference type="GO" id="GO:0046872">
    <property type="term" value="F:metal ion binding"/>
    <property type="evidence" value="ECO:0007669"/>
    <property type="project" value="UniProtKB-KW"/>
</dbReference>
<dbReference type="GO" id="GO:0004222">
    <property type="term" value="F:metalloendopeptidase activity"/>
    <property type="evidence" value="ECO:0007669"/>
    <property type="project" value="InterPro"/>
</dbReference>
<dbReference type="GO" id="GO:0016485">
    <property type="term" value="P:protein processing"/>
    <property type="evidence" value="ECO:0007669"/>
    <property type="project" value="TreeGrafter"/>
</dbReference>
<dbReference type="CDD" id="cd08662">
    <property type="entry name" value="M13"/>
    <property type="match status" value="1"/>
</dbReference>
<dbReference type="Gene3D" id="3.40.390.10">
    <property type="entry name" value="Collagenase (Catalytic Domain)"/>
    <property type="match status" value="1"/>
</dbReference>
<dbReference type="Gene3D" id="1.10.1380.10">
    <property type="entry name" value="Neutral endopeptidase , domain2"/>
    <property type="match status" value="1"/>
</dbReference>
<dbReference type="InterPro" id="IPR024079">
    <property type="entry name" value="MetalloPept_cat_dom_sf"/>
</dbReference>
<dbReference type="InterPro" id="IPR000718">
    <property type="entry name" value="Peptidase_M13"/>
</dbReference>
<dbReference type="InterPro" id="IPR018497">
    <property type="entry name" value="Peptidase_M13_C"/>
</dbReference>
<dbReference type="InterPro" id="IPR042089">
    <property type="entry name" value="Peptidase_M13_dom_2"/>
</dbReference>
<dbReference type="InterPro" id="IPR008753">
    <property type="entry name" value="Peptidase_M13_N"/>
</dbReference>
<dbReference type="PANTHER" id="PTHR11733:SF167">
    <property type="entry name" value="FI17812P1-RELATED"/>
    <property type="match status" value="1"/>
</dbReference>
<dbReference type="PANTHER" id="PTHR11733">
    <property type="entry name" value="ZINC METALLOPROTEASE FAMILY M13 NEPRILYSIN-RELATED"/>
    <property type="match status" value="1"/>
</dbReference>
<dbReference type="Pfam" id="PF01431">
    <property type="entry name" value="Peptidase_M13"/>
    <property type="match status" value="1"/>
</dbReference>
<dbReference type="Pfam" id="PF05649">
    <property type="entry name" value="Peptidase_M13_N"/>
    <property type="match status" value="1"/>
</dbReference>
<dbReference type="PRINTS" id="PR00786">
    <property type="entry name" value="NEPRILYSIN"/>
</dbReference>
<dbReference type="SUPFAM" id="SSF55486">
    <property type="entry name" value="Metalloproteases ('zincins'), catalytic domain"/>
    <property type="match status" value="1"/>
</dbReference>
<dbReference type="PROSITE" id="PS51885">
    <property type="entry name" value="NEPRILYSIN"/>
    <property type="match status" value="1"/>
</dbReference>
<dbReference type="PROSITE" id="PS00142">
    <property type="entry name" value="ZINC_PROTEASE"/>
    <property type="match status" value="1"/>
</dbReference>
<name>PEPO_LACLA</name>
<comment type="function">
    <text>Endopeptidase with broad substrate specificity for several oligopeptides.</text>
</comment>
<comment type="cofactor">
    <cofactor evidence="1">
        <name>Zn(2+)</name>
        <dbReference type="ChEBI" id="CHEBI:29105"/>
    </cofactor>
    <text evidence="1">Binds 1 zinc ion per subunit.</text>
</comment>
<comment type="biophysicochemical properties">
    <phDependence>
        <text>Optimum pH is 6.0-6.5.</text>
    </phDependence>
    <temperatureDependence>
        <text>Optimum temperature is 30-38 degrees Celsius.</text>
    </temperatureDependence>
</comment>
<comment type="subunit">
    <text>Monomer.</text>
</comment>
<comment type="similarity">
    <text evidence="2 4">Belongs to the peptidase M13 family.</text>
</comment>
<protein>
    <recommendedName>
        <fullName>Neutral endopeptidase</fullName>
        <ecNumber>3.4.24.-</ecNumber>
    </recommendedName>
    <alternativeName>
        <fullName>Endopeptidase O</fullName>
    </alternativeName>
</protein>
<gene>
    <name type="primary">pepO</name>
    <name type="ordered locus">LL1803</name>
    <name type="ORF">L49741</name>
</gene>